<name>MNMA_CAMC1</name>
<organism>
    <name type="scientific">Campylobacter concisus (strain 13826)</name>
    <dbReference type="NCBI Taxonomy" id="360104"/>
    <lineage>
        <taxon>Bacteria</taxon>
        <taxon>Pseudomonadati</taxon>
        <taxon>Campylobacterota</taxon>
        <taxon>Epsilonproteobacteria</taxon>
        <taxon>Campylobacterales</taxon>
        <taxon>Campylobacteraceae</taxon>
        <taxon>Campylobacter</taxon>
    </lineage>
</organism>
<gene>
    <name evidence="1" type="primary">mnmA</name>
    <name type="ordered locus">Ccon26_13600</name>
    <name type="ORF">CCC13826_1016</name>
</gene>
<comment type="function">
    <text evidence="1">Catalyzes the 2-thiolation of uridine at the wobble position (U34) of tRNA, leading to the formation of s(2)U34.</text>
</comment>
<comment type="catalytic activity">
    <reaction evidence="1">
        <text>S-sulfanyl-L-cysteinyl-[protein] + uridine(34) in tRNA + AH2 + ATP = 2-thiouridine(34) in tRNA + L-cysteinyl-[protein] + A + AMP + diphosphate + H(+)</text>
        <dbReference type="Rhea" id="RHEA:47032"/>
        <dbReference type="Rhea" id="RHEA-COMP:10131"/>
        <dbReference type="Rhea" id="RHEA-COMP:11726"/>
        <dbReference type="Rhea" id="RHEA-COMP:11727"/>
        <dbReference type="Rhea" id="RHEA-COMP:11728"/>
        <dbReference type="ChEBI" id="CHEBI:13193"/>
        <dbReference type="ChEBI" id="CHEBI:15378"/>
        <dbReference type="ChEBI" id="CHEBI:17499"/>
        <dbReference type="ChEBI" id="CHEBI:29950"/>
        <dbReference type="ChEBI" id="CHEBI:30616"/>
        <dbReference type="ChEBI" id="CHEBI:33019"/>
        <dbReference type="ChEBI" id="CHEBI:61963"/>
        <dbReference type="ChEBI" id="CHEBI:65315"/>
        <dbReference type="ChEBI" id="CHEBI:87170"/>
        <dbReference type="ChEBI" id="CHEBI:456215"/>
        <dbReference type="EC" id="2.8.1.13"/>
    </reaction>
</comment>
<comment type="subcellular location">
    <subcellularLocation>
        <location evidence="1">Cytoplasm</location>
    </subcellularLocation>
</comment>
<comment type="similarity">
    <text evidence="1">Belongs to the MnmA/TRMU family.</text>
</comment>
<proteinExistence type="inferred from homology"/>
<protein>
    <recommendedName>
        <fullName evidence="1">tRNA-specific 2-thiouridylase MnmA</fullName>
        <ecNumber evidence="1">2.8.1.13</ecNumber>
    </recommendedName>
</protein>
<accession>A7ZEK1</accession>
<dbReference type="EC" id="2.8.1.13" evidence="1"/>
<dbReference type="EMBL" id="CP000792">
    <property type="protein sequence ID" value="EAT97274.1"/>
    <property type="molecule type" value="Genomic_DNA"/>
</dbReference>
<dbReference type="RefSeq" id="WP_012140112.1">
    <property type="nucleotide sequence ID" value="NC_009802.2"/>
</dbReference>
<dbReference type="SMR" id="A7ZEK1"/>
<dbReference type="STRING" id="360104.CCC13826_1016"/>
<dbReference type="KEGG" id="cco:CCC13826_1016"/>
<dbReference type="eggNOG" id="COG0482">
    <property type="taxonomic scope" value="Bacteria"/>
</dbReference>
<dbReference type="HOGENOM" id="CLU_035188_0_0_7"/>
<dbReference type="OrthoDB" id="9800696at2"/>
<dbReference type="Proteomes" id="UP000001121">
    <property type="component" value="Chromosome"/>
</dbReference>
<dbReference type="GO" id="GO:0005737">
    <property type="term" value="C:cytoplasm"/>
    <property type="evidence" value="ECO:0007669"/>
    <property type="project" value="UniProtKB-SubCell"/>
</dbReference>
<dbReference type="GO" id="GO:0005524">
    <property type="term" value="F:ATP binding"/>
    <property type="evidence" value="ECO:0007669"/>
    <property type="project" value="UniProtKB-KW"/>
</dbReference>
<dbReference type="GO" id="GO:0000049">
    <property type="term" value="F:tRNA binding"/>
    <property type="evidence" value="ECO:0007669"/>
    <property type="project" value="UniProtKB-KW"/>
</dbReference>
<dbReference type="GO" id="GO:0103016">
    <property type="term" value="F:tRNA-uridine 2-sulfurtransferase activity"/>
    <property type="evidence" value="ECO:0007669"/>
    <property type="project" value="UniProtKB-EC"/>
</dbReference>
<dbReference type="GO" id="GO:0002143">
    <property type="term" value="P:tRNA wobble position uridine thiolation"/>
    <property type="evidence" value="ECO:0007669"/>
    <property type="project" value="TreeGrafter"/>
</dbReference>
<dbReference type="CDD" id="cd01998">
    <property type="entry name" value="MnmA_TRMU-like"/>
    <property type="match status" value="1"/>
</dbReference>
<dbReference type="FunFam" id="2.30.30.280:FF:000001">
    <property type="entry name" value="tRNA-specific 2-thiouridylase MnmA"/>
    <property type="match status" value="1"/>
</dbReference>
<dbReference type="Gene3D" id="2.30.30.280">
    <property type="entry name" value="Adenine nucleotide alpha hydrolases-like domains"/>
    <property type="match status" value="1"/>
</dbReference>
<dbReference type="Gene3D" id="3.40.50.620">
    <property type="entry name" value="HUPs"/>
    <property type="match status" value="1"/>
</dbReference>
<dbReference type="Gene3D" id="2.40.30.10">
    <property type="entry name" value="Translation factors"/>
    <property type="match status" value="1"/>
</dbReference>
<dbReference type="HAMAP" id="MF_00144">
    <property type="entry name" value="tRNA_thiouridyl_MnmA"/>
    <property type="match status" value="1"/>
</dbReference>
<dbReference type="InterPro" id="IPR004506">
    <property type="entry name" value="MnmA-like"/>
</dbReference>
<dbReference type="InterPro" id="IPR046885">
    <property type="entry name" value="MnmA-like_C"/>
</dbReference>
<dbReference type="InterPro" id="IPR046884">
    <property type="entry name" value="MnmA-like_central"/>
</dbReference>
<dbReference type="InterPro" id="IPR023382">
    <property type="entry name" value="MnmA-like_central_sf"/>
</dbReference>
<dbReference type="InterPro" id="IPR014729">
    <property type="entry name" value="Rossmann-like_a/b/a_fold"/>
</dbReference>
<dbReference type="NCBIfam" id="NF001138">
    <property type="entry name" value="PRK00143.1"/>
    <property type="match status" value="1"/>
</dbReference>
<dbReference type="NCBIfam" id="TIGR00420">
    <property type="entry name" value="trmU"/>
    <property type="match status" value="1"/>
</dbReference>
<dbReference type="PANTHER" id="PTHR11933:SF5">
    <property type="entry name" value="MITOCHONDRIAL TRNA-SPECIFIC 2-THIOURIDYLASE 1"/>
    <property type="match status" value="1"/>
</dbReference>
<dbReference type="PANTHER" id="PTHR11933">
    <property type="entry name" value="TRNA 5-METHYLAMINOMETHYL-2-THIOURIDYLATE -METHYLTRANSFERASE"/>
    <property type="match status" value="1"/>
</dbReference>
<dbReference type="Pfam" id="PF03054">
    <property type="entry name" value="tRNA_Me_trans"/>
    <property type="match status" value="1"/>
</dbReference>
<dbReference type="Pfam" id="PF20258">
    <property type="entry name" value="tRNA_Me_trans_C"/>
    <property type="match status" value="1"/>
</dbReference>
<dbReference type="Pfam" id="PF20259">
    <property type="entry name" value="tRNA_Me_trans_M"/>
    <property type="match status" value="1"/>
</dbReference>
<dbReference type="SUPFAM" id="SSF52402">
    <property type="entry name" value="Adenine nucleotide alpha hydrolases-like"/>
    <property type="match status" value="1"/>
</dbReference>
<sequence length="340" mass="38391">MKIMVAMSGGVDSTMTAKFLQEAGHEVQGCYMMLHQKPGYHEENIRKVKKVGEYLGIKVHILDLQDKFNEYVYDPFVRLYKEGKTPNPCALCNKFIKLGALLDFAKVNGCEKLATGHYVQVVDGFITCAKDPSKDQSYFLAQVPKEVLKDVIFPLGDKFKKDIKELARGVKVLEEFATQAESSEICFVENTYIEVLNKHYNTNLPGNVVDKDGNIIGRHQGYMHYTIGKRRGFEVFGAHEPHFVIKINAEKNEIVVGTKDDLAQKVVELENVNLFIDEDKFECETKIRYRSPKLEAFVEVDKSSKTAKLTLNQNALGVAQGQLCVMYDGDRVIASGFIKN</sequence>
<feature type="chain" id="PRO_0000349568" description="tRNA-specific 2-thiouridylase MnmA">
    <location>
        <begin position="1"/>
        <end position="340"/>
    </location>
</feature>
<feature type="region of interest" description="Interaction with tRNA" evidence="1">
    <location>
        <begin position="134"/>
        <end position="136"/>
    </location>
</feature>
<feature type="region of interest" description="Interaction with tRNA" evidence="1">
    <location>
        <begin position="288"/>
        <end position="289"/>
    </location>
</feature>
<feature type="active site" description="Nucleophile" evidence="1">
    <location>
        <position position="92"/>
    </location>
</feature>
<feature type="active site" description="Cysteine persulfide intermediate" evidence="1">
    <location>
        <position position="186"/>
    </location>
</feature>
<feature type="binding site" evidence="1">
    <location>
        <begin position="6"/>
        <end position="13"/>
    </location>
    <ligand>
        <name>ATP</name>
        <dbReference type="ChEBI" id="CHEBI:30616"/>
    </ligand>
</feature>
<feature type="binding site" evidence="1">
    <location>
        <position position="32"/>
    </location>
    <ligand>
        <name>ATP</name>
        <dbReference type="ChEBI" id="CHEBI:30616"/>
    </ligand>
</feature>
<feature type="binding site" evidence="1">
    <location>
        <position position="116"/>
    </location>
    <ligand>
        <name>ATP</name>
        <dbReference type="ChEBI" id="CHEBI:30616"/>
    </ligand>
</feature>
<feature type="site" description="Interaction with tRNA" evidence="1">
    <location>
        <position position="117"/>
    </location>
</feature>
<feature type="site" description="Interaction with tRNA" evidence="1">
    <location>
        <position position="322"/>
    </location>
</feature>
<feature type="disulfide bond" description="Alternate" evidence="1">
    <location>
        <begin position="92"/>
        <end position="186"/>
    </location>
</feature>
<evidence type="ECO:0000255" key="1">
    <source>
        <dbReference type="HAMAP-Rule" id="MF_00144"/>
    </source>
</evidence>
<reference key="1">
    <citation type="submission" date="2007-10" db="EMBL/GenBank/DDBJ databases">
        <title>Genome sequence of Campylobacter concisus 13826 isolated from human feces.</title>
        <authorList>
            <person name="Fouts D.E."/>
            <person name="Mongodin E.F."/>
            <person name="Puiu D."/>
            <person name="Sebastian Y."/>
            <person name="Miller W.G."/>
            <person name="Mandrell R.E."/>
            <person name="On S."/>
            <person name="Nelson K.E."/>
        </authorList>
    </citation>
    <scope>NUCLEOTIDE SEQUENCE [LARGE SCALE GENOMIC DNA]</scope>
    <source>
        <strain>13826</strain>
    </source>
</reference>
<keyword id="KW-0067">ATP-binding</keyword>
<keyword id="KW-0963">Cytoplasm</keyword>
<keyword id="KW-1015">Disulfide bond</keyword>
<keyword id="KW-0547">Nucleotide-binding</keyword>
<keyword id="KW-0694">RNA-binding</keyword>
<keyword id="KW-0808">Transferase</keyword>
<keyword id="KW-0819">tRNA processing</keyword>
<keyword id="KW-0820">tRNA-binding</keyword>